<sequence>MKPSPRTPDFSPYLDFDRAQWRELRNSMPQVLTQKEVIELRGIGENIDLAEVAEVYLPLSRLIHLQVAARQQLTAATETFLGTSPSISVPFVIGVAGSVAVGKSTTARLLQVLLQRWNSHPRVDLVTTDGFLYPGAELIRRGLMSRKGFPESYDQRALLRFVTDVKSGKLEVNAPVYSHTAYDRVPGEFTTVRQPDILIVEGLNVLQTGPTLMVSDLFDFSVYVDARTEDIEKWYIDRFLKLRDTAFRRPGAHFSHYADMADPESIAVARELWQSINLPNLVENILPTRVRASLVLKKGSDHLVERVRMRKI</sequence>
<proteinExistence type="inferred from homology"/>
<organism>
    <name type="scientific">Corynebacterium glutamicum (strain ATCC 13032 / DSM 20300 / JCM 1318 / BCRC 11384 / CCUG 27702 / LMG 3730 / NBRC 12168 / NCIMB 10025 / NRRL B-2784 / 534)</name>
    <dbReference type="NCBI Taxonomy" id="196627"/>
    <lineage>
        <taxon>Bacteria</taxon>
        <taxon>Bacillati</taxon>
        <taxon>Actinomycetota</taxon>
        <taxon>Actinomycetes</taxon>
        <taxon>Mycobacteriales</taxon>
        <taxon>Corynebacteriaceae</taxon>
        <taxon>Corynebacterium</taxon>
    </lineage>
</organism>
<protein>
    <recommendedName>
        <fullName evidence="1">Pantothenate kinase</fullName>
        <ecNumber evidence="1">2.7.1.33</ecNumber>
    </recommendedName>
    <alternativeName>
        <fullName evidence="1">Pantothenic acid kinase</fullName>
    </alternativeName>
</protein>
<gene>
    <name evidence="1" type="primary">coaA</name>
    <name type="ordered locus">Cgl0995</name>
    <name type="ordered locus">cg1132</name>
</gene>
<name>COAA_CORGL</name>
<comment type="catalytic activity">
    <reaction evidence="1">
        <text>(R)-pantothenate + ATP = (R)-4'-phosphopantothenate + ADP + H(+)</text>
        <dbReference type="Rhea" id="RHEA:16373"/>
        <dbReference type="ChEBI" id="CHEBI:10986"/>
        <dbReference type="ChEBI" id="CHEBI:15378"/>
        <dbReference type="ChEBI" id="CHEBI:29032"/>
        <dbReference type="ChEBI" id="CHEBI:30616"/>
        <dbReference type="ChEBI" id="CHEBI:456216"/>
        <dbReference type="EC" id="2.7.1.33"/>
    </reaction>
</comment>
<comment type="pathway">
    <text evidence="1">Cofactor biosynthesis; coenzyme A biosynthesis; CoA from (R)-pantothenate: step 1/5.</text>
</comment>
<comment type="subcellular location">
    <subcellularLocation>
        <location evidence="1">Cytoplasm</location>
    </subcellularLocation>
</comment>
<comment type="similarity">
    <text evidence="1">Belongs to the prokaryotic pantothenate kinase family.</text>
</comment>
<comment type="sequence caution" evidence="2">
    <conflict type="erroneous initiation">
        <sequence resource="EMBL-CDS" id="CAF19699"/>
    </conflict>
</comment>
<accession>Q8NRQ2</accession>
<dbReference type="EC" id="2.7.1.33" evidence="1"/>
<dbReference type="EMBL" id="BA000036">
    <property type="protein sequence ID" value="BAB98388.1"/>
    <property type="molecule type" value="Genomic_DNA"/>
</dbReference>
<dbReference type="EMBL" id="BX927151">
    <property type="protein sequence ID" value="CAF19699.1"/>
    <property type="status" value="ALT_INIT"/>
    <property type="molecule type" value="Genomic_DNA"/>
</dbReference>
<dbReference type="RefSeq" id="NP_600220.1">
    <property type="nucleotide sequence ID" value="NC_003450.3"/>
</dbReference>
<dbReference type="SMR" id="Q8NRQ2"/>
<dbReference type="STRING" id="196627.cg1132"/>
<dbReference type="KEGG" id="cgb:cg1132"/>
<dbReference type="KEGG" id="cgl:Cgl0995"/>
<dbReference type="PATRIC" id="fig|196627.13.peg.977"/>
<dbReference type="eggNOG" id="COG1072">
    <property type="taxonomic scope" value="Bacteria"/>
</dbReference>
<dbReference type="HOGENOM" id="CLU_053818_1_1_11"/>
<dbReference type="OrthoDB" id="1550976at2"/>
<dbReference type="BioCyc" id="CORYNE:G18NG-10567-MONOMER"/>
<dbReference type="UniPathway" id="UPA00241">
    <property type="reaction ID" value="UER00352"/>
</dbReference>
<dbReference type="Proteomes" id="UP000000582">
    <property type="component" value="Chromosome"/>
</dbReference>
<dbReference type="Proteomes" id="UP000001009">
    <property type="component" value="Chromosome"/>
</dbReference>
<dbReference type="GO" id="GO:0005737">
    <property type="term" value="C:cytoplasm"/>
    <property type="evidence" value="ECO:0007669"/>
    <property type="project" value="UniProtKB-SubCell"/>
</dbReference>
<dbReference type="GO" id="GO:0005524">
    <property type="term" value="F:ATP binding"/>
    <property type="evidence" value="ECO:0007669"/>
    <property type="project" value="UniProtKB-UniRule"/>
</dbReference>
<dbReference type="GO" id="GO:0004594">
    <property type="term" value="F:pantothenate kinase activity"/>
    <property type="evidence" value="ECO:0007669"/>
    <property type="project" value="UniProtKB-UniRule"/>
</dbReference>
<dbReference type="GO" id="GO:0015937">
    <property type="term" value="P:coenzyme A biosynthetic process"/>
    <property type="evidence" value="ECO:0007669"/>
    <property type="project" value="UniProtKB-UniRule"/>
</dbReference>
<dbReference type="CDD" id="cd02025">
    <property type="entry name" value="PanK"/>
    <property type="match status" value="1"/>
</dbReference>
<dbReference type="Gene3D" id="3.40.50.300">
    <property type="entry name" value="P-loop containing nucleotide triphosphate hydrolases"/>
    <property type="match status" value="1"/>
</dbReference>
<dbReference type="HAMAP" id="MF_00215">
    <property type="entry name" value="Pantothen_kinase_1"/>
    <property type="match status" value="1"/>
</dbReference>
<dbReference type="InterPro" id="IPR027417">
    <property type="entry name" value="P-loop_NTPase"/>
</dbReference>
<dbReference type="InterPro" id="IPR004566">
    <property type="entry name" value="PanK"/>
</dbReference>
<dbReference type="InterPro" id="IPR006083">
    <property type="entry name" value="PRK/URK"/>
</dbReference>
<dbReference type="NCBIfam" id="TIGR00554">
    <property type="entry name" value="panK_bact"/>
    <property type="match status" value="1"/>
</dbReference>
<dbReference type="PANTHER" id="PTHR10285">
    <property type="entry name" value="URIDINE KINASE"/>
    <property type="match status" value="1"/>
</dbReference>
<dbReference type="Pfam" id="PF00485">
    <property type="entry name" value="PRK"/>
    <property type="match status" value="1"/>
</dbReference>
<dbReference type="PIRSF" id="PIRSF000545">
    <property type="entry name" value="Pantothenate_kin"/>
    <property type="match status" value="1"/>
</dbReference>
<dbReference type="SUPFAM" id="SSF52540">
    <property type="entry name" value="P-loop containing nucleoside triphosphate hydrolases"/>
    <property type="match status" value="1"/>
</dbReference>
<feature type="chain" id="PRO_0000194424" description="Pantothenate kinase">
    <location>
        <begin position="1"/>
        <end position="312"/>
    </location>
</feature>
<feature type="binding site" evidence="1">
    <location>
        <begin position="97"/>
        <end position="104"/>
    </location>
    <ligand>
        <name>ATP</name>
        <dbReference type="ChEBI" id="CHEBI:30616"/>
    </ligand>
</feature>
<reference key="1">
    <citation type="journal article" date="2003" name="Appl. Microbiol. Biotechnol.">
        <title>The Corynebacterium glutamicum genome: features and impacts on biotechnological processes.</title>
        <authorList>
            <person name="Ikeda M."/>
            <person name="Nakagawa S."/>
        </authorList>
    </citation>
    <scope>NUCLEOTIDE SEQUENCE [LARGE SCALE GENOMIC DNA]</scope>
    <source>
        <strain>ATCC 13032 / DSM 20300 / JCM 1318 / BCRC 11384 / CCUG 27702 / LMG 3730 / NBRC 12168 / NCIMB 10025 / NRRL B-2784 / 534</strain>
    </source>
</reference>
<reference key="2">
    <citation type="journal article" date="2003" name="J. Biotechnol.">
        <title>The complete Corynebacterium glutamicum ATCC 13032 genome sequence and its impact on the production of L-aspartate-derived amino acids and vitamins.</title>
        <authorList>
            <person name="Kalinowski J."/>
            <person name="Bathe B."/>
            <person name="Bartels D."/>
            <person name="Bischoff N."/>
            <person name="Bott M."/>
            <person name="Burkovski A."/>
            <person name="Dusch N."/>
            <person name="Eggeling L."/>
            <person name="Eikmanns B.J."/>
            <person name="Gaigalat L."/>
            <person name="Goesmann A."/>
            <person name="Hartmann M."/>
            <person name="Huthmacher K."/>
            <person name="Kraemer R."/>
            <person name="Linke B."/>
            <person name="McHardy A.C."/>
            <person name="Meyer F."/>
            <person name="Moeckel B."/>
            <person name="Pfefferle W."/>
            <person name="Puehler A."/>
            <person name="Rey D.A."/>
            <person name="Rueckert C."/>
            <person name="Rupp O."/>
            <person name="Sahm H."/>
            <person name="Wendisch V.F."/>
            <person name="Wiegraebe I."/>
            <person name="Tauch A."/>
        </authorList>
    </citation>
    <scope>NUCLEOTIDE SEQUENCE [LARGE SCALE GENOMIC DNA]</scope>
    <source>
        <strain>ATCC 13032 / DSM 20300 / JCM 1318 / BCRC 11384 / CCUG 27702 / LMG 3730 / NBRC 12168 / NCIMB 10025 / NRRL B-2784 / 534</strain>
    </source>
</reference>
<keyword id="KW-0067">ATP-binding</keyword>
<keyword id="KW-0173">Coenzyme A biosynthesis</keyword>
<keyword id="KW-0963">Cytoplasm</keyword>
<keyword id="KW-0418">Kinase</keyword>
<keyword id="KW-0547">Nucleotide-binding</keyword>
<keyword id="KW-1185">Reference proteome</keyword>
<keyword id="KW-0808">Transferase</keyword>
<evidence type="ECO:0000255" key="1">
    <source>
        <dbReference type="HAMAP-Rule" id="MF_00215"/>
    </source>
</evidence>
<evidence type="ECO:0000305" key="2"/>